<feature type="chain" id="PRO_0000146876" description="Adenosylcobinamide-GDP ribazoletransferase">
    <location>
        <begin position="1"/>
        <end position="247"/>
    </location>
</feature>
<feature type="transmembrane region" description="Helical" evidence="2">
    <location>
        <begin position="34"/>
        <end position="54"/>
    </location>
</feature>
<feature type="transmembrane region" description="Helical" evidence="2">
    <location>
        <begin position="59"/>
        <end position="79"/>
    </location>
</feature>
<feature type="transmembrane region" description="Helical" evidence="2">
    <location>
        <begin position="113"/>
        <end position="133"/>
    </location>
</feature>
<feature type="transmembrane region" description="Helical" evidence="2">
    <location>
        <begin position="138"/>
        <end position="158"/>
    </location>
</feature>
<feature type="transmembrane region" description="Helical" evidence="2">
    <location>
        <begin position="194"/>
        <end position="214"/>
    </location>
</feature>
<feature type="sequence conflict" description="In Ref. 1 and 5." evidence="4" ref="1 5">
    <original>SG</original>
    <variation>RR</variation>
    <location>
        <begin position="48"/>
        <end position="49"/>
    </location>
</feature>
<feature type="sequence conflict" description="In Ref. 5; AAA56875." evidence="4" ref="5">
    <original>A</original>
    <variation>R</variation>
    <location>
        <position position="145"/>
    </location>
</feature>
<feature type="sequence conflict" description="In Ref. 5; AAA56875." evidence="4" ref="5">
    <original>A</original>
    <variation>T</variation>
    <location>
        <position position="203"/>
    </location>
</feature>
<organism>
    <name type="scientific">Escherichia coli (strain K12)</name>
    <dbReference type="NCBI Taxonomy" id="83333"/>
    <lineage>
        <taxon>Bacteria</taxon>
        <taxon>Pseudomonadati</taxon>
        <taxon>Pseudomonadota</taxon>
        <taxon>Gammaproteobacteria</taxon>
        <taxon>Enterobacterales</taxon>
        <taxon>Enterobacteriaceae</taxon>
        <taxon>Escherichia</taxon>
    </lineage>
</organism>
<comment type="function">
    <text evidence="1">Joins adenosylcobinamide-GDP and alpha-ribazole to generate adenosylcobalamin (Ado-cobalamin). Also synthesizes adenosylcobalamin 5'-phosphate from adenosylcobinamide-GDP and alpha-ribazole 5'-phosphate (By similarity).</text>
</comment>
<comment type="catalytic activity">
    <reaction>
        <text>alpha-ribazole + adenosylcob(III)inamide-GDP = adenosylcob(III)alamin + GMP + H(+)</text>
        <dbReference type="Rhea" id="RHEA:16049"/>
        <dbReference type="ChEBI" id="CHEBI:10329"/>
        <dbReference type="ChEBI" id="CHEBI:15378"/>
        <dbReference type="ChEBI" id="CHEBI:18408"/>
        <dbReference type="ChEBI" id="CHEBI:58115"/>
        <dbReference type="ChEBI" id="CHEBI:60487"/>
        <dbReference type="EC" id="2.7.8.26"/>
    </reaction>
</comment>
<comment type="catalytic activity">
    <reaction>
        <text>alpha-ribazole 5'-phosphate + adenosylcob(III)inamide-GDP = adenosylcob(III)alamin 5'-phosphate + GMP + H(+)</text>
        <dbReference type="Rhea" id="RHEA:23560"/>
        <dbReference type="ChEBI" id="CHEBI:15378"/>
        <dbReference type="ChEBI" id="CHEBI:57918"/>
        <dbReference type="ChEBI" id="CHEBI:58115"/>
        <dbReference type="ChEBI" id="CHEBI:60487"/>
        <dbReference type="ChEBI" id="CHEBI:60493"/>
        <dbReference type="EC" id="2.7.8.26"/>
    </reaction>
</comment>
<comment type="cofactor">
    <cofactor evidence="1">
        <name>Mg(2+)</name>
        <dbReference type="ChEBI" id="CHEBI:18420"/>
    </cofactor>
</comment>
<comment type="pathway">
    <text>Cofactor biosynthesis; adenosylcobalamin biosynthesis; adenosylcobalamin from cob(II)yrinate a,c-diamide: step 7/7.</text>
</comment>
<comment type="subcellular location">
    <subcellularLocation>
        <location evidence="3">Cell inner membrane</location>
        <topology evidence="3">Multi-pass membrane protein</topology>
    </subcellularLocation>
</comment>
<comment type="induction">
    <text>By cobinamide.</text>
</comment>
<comment type="similarity">
    <text evidence="4">Belongs to the CobS family.</text>
</comment>
<reference key="1">
    <citation type="journal article" date="1995" name="J. Bacteriol.">
        <title>The cobalamin (coenzyme B12) biosynthetic genes of Escherichia coli.</title>
        <authorList>
            <person name="Lawrence J.G."/>
            <person name="Roth J.R."/>
        </authorList>
    </citation>
    <scope>NUCLEOTIDE SEQUENCE [GENOMIC DNA]</scope>
    <source>
        <strain>K12 / W3110 / ATCC 27325 / DSM 5911</strain>
    </source>
</reference>
<reference key="2">
    <citation type="journal article" date="1996" name="DNA Res.">
        <title>A 460-kb DNA sequence of the Escherichia coli K-12 genome corresponding to the 40.1-50.0 min region on the linkage map.</title>
        <authorList>
            <person name="Itoh T."/>
            <person name="Aiba H."/>
            <person name="Baba T."/>
            <person name="Fujita K."/>
            <person name="Hayashi K."/>
            <person name="Inada T."/>
            <person name="Isono K."/>
            <person name="Kasai H."/>
            <person name="Kimura S."/>
            <person name="Kitakawa M."/>
            <person name="Kitagawa M."/>
            <person name="Makino K."/>
            <person name="Miki T."/>
            <person name="Mizobuchi K."/>
            <person name="Mori H."/>
            <person name="Mori T."/>
            <person name="Motomura K."/>
            <person name="Nakade S."/>
            <person name="Nakamura Y."/>
            <person name="Nashimoto H."/>
            <person name="Nishio Y."/>
            <person name="Oshima T."/>
            <person name="Saito N."/>
            <person name="Sampei G."/>
            <person name="Seki Y."/>
            <person name="Sivasundaram S."/>
            <person name="Tagami H."/>
            <person name="Takeda J."/>
            <person name="Takemoto K."/>
            <person name="Wada C."/>
            <person name="Yamamoto Y."/>
            <person name="Horiuchi T."/>
        </authorList>
    </citation>
    <scope>NUCLEOTIDE SEQUENCE [LARGE SCALE GENOMIC DNA]</scope>
    <source>
        <strain>K12 / W3110 / ATCC 27325 / DSM 5911</strain>
    </source>
</reference>
<reference key="3">
    <citation type="journal article" date="1997" name="Science">
        <title>The complete genome sequence of Escherichia coli K-12.</title>
        <authorList>
            <person name="Blattner F.R."/>
            <person name="Plunkett G. III"/>
            <person name="Bloch C.A."/>
            <person name="Perna N.T."/>
            <person name="Burland V."/>
            <person name="Riley M."/>
            <person name="Collado-Vides J."/>
            <person name="Glasner J.D."/>
            <person name="Rode C.K."/>
            <person name="Mayhew G.F."/>
            <person name="Gregor J."/>
            <person name="Davis N.W."/>
            <person name="Kirkpatrick H.A."/>
            <person name="Goeden M.A."/>
            <person name="Rose D.J."/>
            <person name="Mau B."/>
            <person name="Shao Y."/>
        </authorList>
    </citation>
    <scope>NUCLEOTIDE SEQUENCE [LARGE SCALE GENOMIC DNA]</scope>
    <source>
        <strain>K12 / MG1655 / ATCC 47076</strain>
    </source>
</reference>
<reference key="4">
    <citation type="journal article" date="2006" name="Mol. Syst. Biol.">
        <title>Highly accurate genome sequences of Escherichia coli K-12 strains MG1655 and W3110.</title>
        <authorList>
            <person name="Hayashi K."/>
            <person name="Morooka N."/>
            <person name="Yamamoto Y."/>
            <person name="Fujita K."/>
            <person name="Isono K."/>
            <person name="Choi S."/>
            <person name="Ohtsubo E."/>
            <person name="Baba T."/>
            <person name="Wanner B.L."/>
            <person name="Mori H."/>
            <person name="Horiuchi T."/>
        </authorList>
    </citation>
    <scope>NUCLEOTIDE SEQUENCE [LARGE SCALE GENOMIC DNA]</scope>
    <source>
        <strain>K12 / W3110 / ATCC 27325 / DSM 5911</strain>
    </source>
</reference>
<reference key="5">
    <citation type="submission" date="1993-10" db="EMBL/GenBank/DDBJ databases">
        <title>Location of cobS and cobT gene sequences on the physical map of the Escherichia coli K-12 chromosome.</title>
        <authorList>
            <person name="Collins C.M."/>
            <person name="Gutman D.M."/>
            <person name="Isaza J."/>
        </authorList>
    </citation>
    <scope>NUCLEOTIDE SEQUENCE [GENOMIC DNA] OF 31-247</scope>
    <source>
        <strain>K12 / DH5-alpha</strain>
    </source>
</reference>
<reference key="6">
    <citation type="journal article" date="2005" name="Science">
        <title>Global topology analysis of the Escherichia coli inner membrane proteome.</title>
        <authorList>
            <person name="Daley D.O."/>
            <person name="Rapp M."/>
            <person name="Granseth E."/>
            <person name="Melen K."/>
            <person name="Drew D."/>
            <person name="von Heijne G."/>
        </authorList>
    </citation>
    <scope>SUBCELLULAR LOCATION</scope>
    <source>
        <strain>K12 / MG1655 / ATCC 47076</strain>
    </source>
</reference>
<sequence>MSKLFWAMLSFITRLPVPRRWSQGLDFEHYSRGIITFPLIGLLLGAISGLVFMVLQAWCGAPLAALFSVLVLVLMTGGFHLDGLADTCDGVFSARSRDRMLEIMRDSRLGTHGGLALIFVVLAKILVLSELALRGESILASLAAACAVSRGTAALLMYRHRYAREEGLGNVFIGKIDGRQTCVTLGLAAIFAAVLLPGMHGVAAMVVTMVAIFILGQLLKRTLGGQTGDTLGAAIELGELVFLLALL</sequence>
<evidence type="ECO:0000250" key="1"/>
<evidence type="ECO:0000255" key="2"/>
<evidence type="ECO:0000269" key="3">
    <source>
    </source>
</evidence>
<evidence type="ECO:0000305" key="4"/>
<proteinExistence type="evidence at transcript level"/>
<protein>
    <recommendedName>
        <fullName>Adenosylcobinamide-GDP ribazoletransferase</fullName>
        <ecNumber>2.7.8.26</ecNumber>
    </recommendedName>
    <alternativeName>
        <fullName>Cobalamin synthase</fullName>
    </alternativeName>
    <alternativeName>
        <fullName>Cobalamin-5'-phosphate synthase</fullName>
    </alternativeName>
</protein>
<keyword id="KW-0997">Cell inner membrane</keyword>
<keyword id="KW-1003">Cell membrane</keyword>
<keyword id="KW-0169">Cobalamin biosynthesis</keyword>
<keyword id="KW-0460">Magnesium</keyword>
<keyword id="KW-0472">Membrane</keyword>
<keyword id="KW-1185">Reference proteome</keyword>
<keyword id="KW-0808">Transferase</keyword>
<keyword id="KW-0812">Transmembrane</keyword>
<keyword id="KW-1133">Transmembrane helix</keyword>
<name>COBS_ECOLI</name>
<accession>P36561</accession>
<accession>P76354</accession>
<gene>
    <name type="primary">cobS</name>
    <name type="ordered locus">b1992</name>
    <name type="ordered locus">JW1970</name>
</gene>
<dbReference type="EC" id="2.7.8.26"/>
<dbReference type="EMBL" id="U33333">
    <property type="protein sequence ID" value="AAA78907.1"/>
    <property type="molecule type" value="Genomic_DNA"/>
</dbReference>
<dbReference type="EMBL" id="U00096">
    <property type="protein sequence ID" value="AAC75053.1"/>
    <property type="molecule type" value="Genomic_DNA"/>
</dbReference>
<dbReference type="EMBL" id="AP009048">
    <property type="protein sequence ID" value="BAA15809.1"/>
    <property type="molecule type" value="Genomic_DNA"/>
</dbReference>
<dbReference type="EMBL" id="L25054">
    <property type="protein sequence ID" value="AAA56875.1"/>
    <property type="molecule type" value="Genomic_DNA"/>
</dbReference>
<dbReference type="PIR" id="G64963">
    <property type="entry name" value="G64963"/>
</dbReference>
<dbReference type="RefSeq" id="NP_416496.1">
    <property type="nucleotide sequence ID" value="NC_000913.3"/>
</dbReference>
<dbReference type="RefSeq" id="WP_001326708.1">
    <property type="nucleotide sequence ID" value="NZ_SSUV01000031.1"/>
</dbReference>
<dbReference type="BioGRID" id="4260409">
    <property type="interactions" value="17"/>
</dbReference>
<dbReference type="FunCoup" id="P36561">
    <property type="interactions" value="297"/>
</dbReference>
<dbReference type="IntAct" id="P36561">
    <property type="interactions" value="5"/>
</dbReference>
<dbReference type="STRING" id="511145.b1992"/>
<dbReference type="PaxDb" id="511145-b1992"/>
<dbReference type="EnsemblBacteria" id="AAC75053">
    <property type="protein sequence ID" value="AAC75053"/>
    <property type="gene ID" value="b1992"/>
</dbReference>
<dbReference type="GeneID" id="946520"/>
<dbReference type="KEGG" id="ecj:JW1970"/>
<dbReference type="KEGG" id="eco:b1992"/>
<dbReference type="KEGG" id="ecoc:C3026_11240"/>
<dbReference type="PATRIC" id="fig|1411691.4.peg.262"/>
<dbReference type="EchoBASE" id="EB2070"/>
<dbReference type="eggNOG" id="COG0368">
    <property type="taxonomic scope" value="Bacteria"/>
</dbReference>
<dbReference type="HOGENOM" id="CLU_057426_1_1_6"/>
<dbReference type="InParanoid" id="P36561"/>
<dbReference type="OMA" id="GHTGDTY"/>
<dbReference type="OrthoDB" id="9794626at2"/>
<dbReference type="PhylomeDB" id="P36561"/>
<dbReference type="BioCyc" id="EcoCyc:COBS-MONOMER"/>
<dbReference type="BioCyc" id="MetaCyc:COBS-MONOMER"/>
<dbReference type="UniPathway" id="UPA00148">
    <property type="reaction ID" value="UER00238"/>
</dbReference>
<dbReference type="PRO" id="PR:P36561"/>
<dbReference type="Proteomes" id="UP000000625">
    <property type="component" value="Chromosome"/>
</dbReference>
<dbReference type="GO" id="GO:0005886">
    <property type="term" value="C:plasma membrane"/>
    <property type="evidence" value="ECO:0000314"/>
    <property type="project" value="EcoCyc"/>
</dbReference>
<dbReference type="GO" id="GO:0051073">
    <property type="term" value="F:adenosylcobinamide-GDP ribazoletransferase activity"/>
    <property type="evidence" value="ECO:0000269"/>
    <property type="project" value="EcoCyc"/>
</dbReference>
<dbReference type="GO" id="GO:0008818">
    <property type="term" value="F:cobalamin 5'-phosphate synthase activity"/>
    <property type="evidence" value="ECO:0007669"/>
    <property type="project" value="UniProtKB-UniRule"/>
</dbReference>
<dbReference type="GO" id="GO:0009236">
    <property type="term" value="P:cobalamin biosynthetic process"/>
    <property type="evidence" value="ECO:0000315"/>
    <property type="project" value="EcoliWiki"/>
</dbReference>
<dbReference type="HAMAP" id="MF_00719">
    <property type="entry name" value="CobS"/>
    <property type="match status" value="1"/>
</dbReference>
<dbReference type="InterPro" id="IPR003805">
    <property type="entry name" value="CobS"/>
</dbReference>
<dbReference type="NCBIfam" id="TIGR00317">
    <property type="entry name" value="cobS"/>
    <property type="match status" value="1"/>
</dbReference>
<dbReference type="PANTHER" id="PTHR34148">
    <property type="entry name" value="ADENOSYLCOBINAMIDE-GDP RIBAZOLETRANSFERASE"/>
    <property type="match status" value="1"/>
</dbReference>
<dbReference type="PANTHER" id="PTHR34148:SF1">
    <property type="entry name" value="ADENOSYLCOBINAMIDE-GDP RIBAZOLETRANSFERASE"/>
    <property type="match status" value="1"/>
</dbReference>
<dbReference type="Pfam" id="PF02654">
    <property type="entry name" value="CobS"/>
    <property type="match status" value="1"/>
</dbReference>